<proteinExistence type="evidence at protein level"/>
<feature type="peptide" id="PRO_0000457915" description="Conotoxin Vi14b" evidence="1">
    <location>
        <begin position="1"/>
        <end position="28"/>
    </location>
</feature>
<feature type="modified residue" description="N6-acetyllysine" evidence="4">
    <location>
        <position position="15"/>
    </location>
</feature>
<feature type="modified residue" description="N6-acetyllysine" evidence="4">
    <location>
        <position position="25"/>
    </location>
</feature>
<feature type="disulfide bond" evidence="1">
    <location>
        <begin position="4"/>
        <end position="21"/>
    </location>
</feature>
<feature type="disulfide bond" evidence="1">
    <location>
        <begin position="7"/>
        <end position="18"/>
    </location>
</feature>
<accession>P0DQY3</accession>
<protein>
    <recommendedName>
        <fullName evidence="2">Conotoxin Vi14b</fullName>
    </recommendedName>
</protein>
<dbReference type="SMR" id="P0DQY3"/>
<dbReference type="iPTMnet" id="P0DQY3"/>
<dbReference type="GO" id="GO:0005576">
    <property type="term" value="C:extracellular region"/>
    <property type="evidence" value="ECO:0007669"/>
    <property type="project" value="UniProtKB-SubCell"/>
</dbReference>
<dbReference type="Gene3D" id="6.20.20.10">
    <property type="match status" value="1"/>
</dbReference>
<dbReference type="InterPro" id="IPR036410">
    <property type="entry name" value="HSP_DnaJ_Cys-rich_dom_sf"/>
</dbReference>
<dbReference type="SUPFAM" id="SSF57938">
    <property type="entry name" value="DnaJ/Hsp40 cysteine-rich domain"/>
    <property type="match status" value="1"/>
</dbReference>
<sequence>QQMCGRCGGTGQIIKNECKTCHGKKVTK</sequence>
<name>CUEB_CONVR</name>
<keyword id="KW-0007">Acetylation</keyword>
<keyword id="KW-0903">Direct protein sequencing</keyword>
<keyword id="KW-1015">Disulfide bond</keyword>
<keyword id="KW-0964">Secreted</keyword>
<evidence type="ECO:0000269" key="1">
    <source>
    </source>
</evidence>
<evidence type="ECO:0000303" key="2">
    <source>
    </source>
</evidence>
<evidence type="ECO:0000305" key="3"/>
<evidence type="ECO:0000305" key="4">
    <source>
    </source>
</evidence>
<comment type="function">
    <text evidence="1">In vitro, inhibits proliferation of the mice ovarian cancer cells ID8.</text>
</comment>
<comment type="subcellular location">
    <subcellularLocation>
        <location evidence="1">Secreted</location>
    </subcellularLocation>
</comment>
<comment type="tissue specificity">
    <text evidence="4">Expressed by the venom gland.</text>
</comment>
<comment type="domain">
    <text evidence="3">The cysteine framework is XIV (C-C-C-C).</text>
</comment>
<comment type="PTM">
    <text evidence="4">The two N6-acetyllysines at position 15 and 25 have been deduced from the mass difference of 42. They are not common in venom proteins.</text>
</comment>
<organism>
    <name type="scientific">Conus virgo</name>
    <name type="common">Virgin cone</name>
    <dbReference type="NCBI Taxonomy" id="89427"/>
    <lineage>
        <taxon>Eukaryota</taxon>
        <taxon>Metazoa</taxon>
        <taxon>Spiralia</taxon>
        <taxon>Lophotrochozoa</taxon>
        <taxon>Mollusca</taxon>
        <taxon>Gastropoda</taxon>
        <taxon>Caenogastropoda</taxon>
        <taxon>Neogastropoda</taxon>
        <taxon>Conoidea</taxon>
        <taxon>Conidae</taxon>
        <taxon>Conus</taxon>
        <taxon>Virgiconus</taxon>
    </lineage>
</organism>
<reference key="1">
    <citation type="journal article" date="2022" name="Molecules">
        <title>Anti-ovarian cancer conotoxins identified from Conus venom.</title>
        <authorList>
            <person name="Ju S."/>
            <person name="Zhang Y."/>
            <person name="Guo X."/>
            <person name="Yan Q."/>
            <person name="Liu S."/>
            <person name="Ma B."/>
            <person name="Zhang M."/>
            <person name="Bao J."/>
            <person name="Luo S."/>
            <person name="Fu Y."/>
        </authorList>
    </citation>
    <scope>PROTEIN SEQUENCE</scope>
    <scope>IDENTIFICATION BY MASS SPECTROMETRY</scope>
    <scope>FUNCTION</scope>
    <scope>SUBCELLULAR LOCATION</scope>
    <scope>DISULFIDE BONDS</scope>
    <scope>SYNTHESIS</scope>
    <scope>PROBABLE ACETYLATION AT LYS-15 AND LYS-25</scope>
    <source>
        <tissue>Venom</tissue>
    </source>
</reference>